<feature type="chain" id="PRO_0000377840" description="Uncharacterized protein 273R">
    <location>
        <begin position="1"/>
        <end position="136"/>
    </location>
</feature>
<name>273R_IIV6</name>
<protein>
    <recommendedName>
        <fullName>Uncharacterized protein 273R</fullName>
    </recommendedName>
</protein>
<sequence>MQNAEIFYKACKNAFTRKEYIFPSGRKEFVLGYEDKCLDCLLEIYCEDDIIVDPRLIPTFKYEKLRDDGTIYSAKYFPDVLIVNDHGNYFIEVKSEWTYKIDTVNIHKKIKSVTESGYDIELWIYNSKKNSKKRTF</sequence>
<organismHost>
    <name type="scientific">Acheta domesticus</name>
    <name type="common">House cricket</name>
    <dbReference type="NCBI Taxonomy" id="6997"/>
</organismHost>
<organismHost>
    <name type="scientific">Chilo suppressalis</name>
    <name type="common">Asiatic rice borer moth</name>
    <dbReference type="NCBI Taxonomy" id="168631"/>
</organismHost>
<organismHost>
    <name type="scientific">Gryllus bimaculatus</name>
    <name type="common">Two-spotted cricket</name>
    <dbReference type="NCBI Taxonomy" id="6999"/>
</organismHost>
<organismHost>
    <name type="scientific">Gryllus campestris</name>
    <dbReference type="NCBI Taxonomy" id="58607"/>
</organismHost>
<organismHost>
    <name type="scientific">Spodoptera frugiperda</name>
    <name type="common">Fall armyworm</name>
    <dbReference type="NCBI Taxonomy" id="7108"/>
</organismHost>
<dbReference type="EMBL" id="AF303741">
    <property type="protein sequence ID" value="AAK82134.1"/>
    <property type="molecule type" value="Genomic_DNA"/>
</dbReference>
<dbReference type="RefSeq" id="NP_149736.1">
    <property type="nucleotide sequence ID" value="NC_003038.1"/>
</dbReference>
<dbReference type="KEGG" id="vg:1733402"/>
<dbReference type="OrthoDB" id="25398at10239"/>
<dbReference type="Proteomes" id="UP000001359">
    <property type="component" value="Genome"/>
</dbReference>
<dbReference type="InterPro" id="IPR055910">
    <property type="entry name" value="DUF7487"/>
</dbReference>
<dbReference type="Pfam" id="PF24308">
    <property type="entry name" value="DUF7487"/>
    <property type="match status" value="1"/>
</dbReference>
<proteinExistence type="predicted"/>
<organism>
    <name type="scientific">Invertebrate iridescent virus 6</name>
    <name type="common">IIV-6</name>
    <name type="synonym">Chilo iridescent virus</name>
    <dbReference type="NCBI Taxonomy" id="176652"/>
    <lineage>
        <taxon>Viruses</taxon>
        <taxon>Varidnaviria</taxon>
        <taxon>Bamfordvirae</taxon>
        <taxon>Nucleocytoviricota</taxon>
        <taxon>Megaviricetes</taxon>
        <taxon>Pimascovirales</taxon>
        <taxon>Iridoviridae</taxon>
        <taxon>Betairidovirinae</taxon>
        <taxon>Iridovirus</taxon>
    </lineage>
</organism>
<gene>
    <name type="ORF">IIV6-273R</name>
</gene>
<accession>Q91FQ0</accession>
<keyword id="KW-1185">Reference proteome</keyword>
<reference key="1">
    <citation type="journal article" date="2001" name="Virology">
        <title>Analysis of the first complete DNA sequence of an invertebrate iridovirus: coding strategy of the genome of Chilo iridescent virus.</title>
        <authorList>
            <person name="Jakob N.J."/>
            <person name="Mueller K."/>
            <person name="Bahr U."/>
            <person name="Darai G."/>
        </authorList>
    </citation>
    <scope>NUCLEOTIDE SEQUENCE [LARGE SCALE GENOMIC DNA]</scope>
</reference>
<reference key="2">
    <citation type="journal article" date="2007" name="Virol. J.">
        <title>Comparative genomic analysis of the family Iridoviridae: re-annotating and defining the core set of iridovirus genes.</title>
        <authorList>
            <person name="Eaton H.E."/>
            <person name="Metcalf J."/>
            <person name="Penny E."/>
            <person name="Tcherepanov V."/>
            <person name="Upton C."/>
            <person name="Brunetti C.R."/>
        </authorList>
    </citation>
    <scope>GENOME REANNOTATION</scope>
</reference>